<proteinExistence type="inferred from homology"/>
<evidence type="ECO:0000255" key="1">
    <source>
        <dbReference type="PROSITE-ProRule" id="PRU00434"/>
    </source>
</evidence>
<evidence type="ECO:0000305" key="2"/>
<geneLocation type="plasmid">
    <name>sym pNGR234a</name>
</geneLocation>
<comment type="function">
    <text>Probably part of the binding-protein-dependent transport system y4mIJK. This system probably transports a sugar. Probably responsible for energy coupling to the transport system.</text>
</comment>
<comment type="subcellular location">
    <subcellularLocation>
        <location evidence="2">Cell membrane</location>
        <topology evidence="2">Peripheral membrane protein</topology>
    </subcellularLocation>
</comment>
<comment type="similarity">
    <text evidence="2">Belongs to the ABC transporter superfamily. Ribose importer (TC 3.A.1.2.1) family.</text>
</comment>
<keyword id="KW-0067">ATP-binding</keyword>
<keyword id="KW-1003">Cell membrane</keyword>
<keyword id="KW-0472">Membrane</keyword>
<keyword id="KW-0547">Nucleotide-binding</keyword>
<keyword id="KW-0614">Plasmid</keyword>
<keyword id="KW-1185">Reference proteome</keyword>
<keyword id="KW-0677">Repeat</keyword>
<keyword id="KW-0762">Sugar transport</keyword>
<keyword id="KW-0813">Transport</keyword>
<sequence>MTDASKDIVSVRSLTKSYGATVVLKGVDFSVARGEIHALLGGNGAGKSTLIRVITGTAAKDGGELVFRDMAGNILTEADGRRKVAVVHQELALLPHLTVAESIALPHFRKGSRVYDGRTAGSQAYAALSMIDRDFAGTALNRLVGDLSLHEGQMVEIARALSSGAELILLDEPTANLTAAETERLFGVLRKLTRGNGLSVVFVSHRMKEIRQIAHVCSIIRDGRTVVGNVPTAELSDLAIIEHMGQAQATAVAHSARPAPVASLSDEPLTIAETGFSVTLQPGTILGVAGAPAGPETLIAALIGAAHERRWTVTRAGWPDRFRSPREAARLGAGFVTGDRSHRGILHSLPIIDNVLASRRATRGSLFATKREEVECLDLMQALKVKAGSLWHLPNTLSGGTQQKLLLARWLNVPSRLLVLEEPTRGVDIGTKREIYQLIRDMATTGTAIVWWSTENAELLEICDQVLAFDTEGRSSGVIERDELSEDKLATLTGMAA</sequence>
<feature type="chain" id="PRO_0000093272" description="Uncharacterized ABC transporter ATP-binding protein y4mK">
    <location>
        <begin position="1"/>
        <end position="497"/>
    </location>
</feature>
<feature type="domain" description="ABC transporter 1" evidence="1">
    <location>
        <begin position="9"/>
        <end position="247"/>
    </location>
</feature>
<feature type="domain" description="ABC transporter 2" evidence="1">
    <location>
        <begin position="256"/>
        <end position="496"/>
    </location>
</feature>
<feature type="binding site" evidence="1">
    <location>
        <begin position="41"/>
        <end position="48"/>
    </location>
    <ligand>
        <name>ATP</name>
        <dbReference type="ChEBI" id="CHEBI:30616"/>
    </ligand>
</feature>
<dbReference type="EMBL" id="U00090">
    <property type="protein sequence ID" value="AAB91774.1"/>
    <property type="molecule type" value="Genomic_DNA"/>
</dbReference>
<dbReference type="RefSeq" id="NP_443977.1">
    <property type="nucleotide sequence ID" value="NC_000914.2"/>
</dbReference>
<dbReference type="RefSeq" id="WP_010875273.1">
    <property type="nucleotide sequence ID" value="NC_000914.2"/>
</dbReference>
<dbReference type="SMR" id="P55570"/>
<dbReference type="KEGG" id="rhi:NGR_a02480"/>
<dbReference type="PATRIC" id="fig|394.7.peg.258"/>
<dbReference type="eggNOG" id="COG1129">
    <property type="taxonomic scope" value="Bacteria"/>
</dbReference>
<dbReference type="HOGENOM" id="CLU_000604_92_3_5"/>
<dbReference type="OrthoDB" id="8098327at2"/>
<dbReference type="Proteomes" id="UP000001054">
    <property type="component" value="Plasmid pNGR234a"/>
</dbReference>
<dbReference type="GO" id="GO:0005886">
    <property type="term" value="C:plasma membrane"/>
    <property type="evidence" value="ECO:0007669"/>
    <property type="project" value="UniProtKB-SubCell"/>
</dbReference>
<dbReference type="GO" id="GO:0005524">
    <property type="term" value="F:ATP binding"/>
    <property type="evidence" value="ECO:0007669"/>
    <property type="project" value="UniProtKB-KW"/>
</dbReference>
<dbReference type="GO" id="GO:0016887">
    <property type="term" value="F:ATP hydrolysis activity"/>
    <property type="evidence" value="ECO:0007669"/>
    <property type="project" value="InterPro"/>
</dbReference>
<dbReference type="CDD" id="cd03216">
    <property type="entry name" value="ABC_Carb_Monos_I"/>
    <property type="match status" value="1"/>
</dbReference>
<dbReference type="CDD" id="cd03215">
    <property type="entry name" value="ABC_Carb_Monos_II"/>
    <property type="match status" value="1"/>
</dbReference>
<dbReference type="Gene3D" id="3.40.50.300">
    <property type="entry name" value="P-loop containing nucleotide triphosphate hydrolases"/>
    <property type="match status" value="2"/>
</dbReference>
<dbReference type="InterPro" id="IPR003593">
    <property type="entry name" value="AAA+_ATPase"/>
</dbReference>
<dbReference type="InterPro" id="IPR050107">
    <property type="entry name" value="ABC_carbohydrate_import_ATPase"/>
</dbReference>
<dbReference type="InterPro" id="IPR003439">
    <property type="entry name" value="ABC_transporter-like_ATP-bd"/>
</dbReference>
<dbReference type="InterPro" id="IPR027417">
    <property type="entry name" value="P-loop_NTPase"/>
</dbReference>
<dbReference type="PANTHER" id="PTHR43790">
    <property type="entry name" value="CARBOHYDRATE TRANSPORT ATP-BINDING PROTEIN MG119-RELATED"/>
    <property type="match status" value="1"/>
</dbReference>
<dbReference type="PANTHER" id="PTHR43790:SF9">
    <property type="entry name" value="GALACTOFURANOSE TRANSPORTER ATP-BINDING PROTEIN YTFR"/>
    <property type="match status" value="1"/>
</dbReference>
<dbReference type="Pfam" id="PF00005">
    <property type="entry name" value="ABC_tran"/>
    <property type="match status" value="2"/>
</dbReference>
<dbReference type="SMART" id="SM00382">
    <property type="entry name" value="AAA"/>
    <property type="match status" value="1"/>
</dbReference>
<dbReference type="SUPFAM" id="SSF52540">
    <property type="entry name" value="P-loop containing nucleoside triphosphate hydrolases"/>
    <property type="match status" value="2"/>
</dbReference>
<dbReference type="PROSITE" id="PS50893">
    <property type="entry name" value="ABC_TRANSPORTER_2"/>
    <property type="match status" value="2"/>
</dbReference>
<gene>
    <name type="ordered locus">NGR_a02480</name>
    <name type="ORF">y4mK</name>
</gene>
<name>Y4MK_SINFN</name>
<accession>P55570</accession>
<organism>
    <name type="scientific">Sinorhizobium fredii (strain NBRC 101917 / NGR234)</name>
    <dbReference type="NCBI Taxonomy" id="394"/>
    <lineage>
        <taxon>Bacteria</taxon>
        <taxon>Pseudomonadati</taxon>
        <taxon>Pseudomonadota</taxon>
        <taxon>Alphaproteobacteria</taxon>
        <taxon>Hyphomicrobiales</taxon>
        <taxon>Rhizobiaceae</taxon>
        <taxon>Sinorhizobium/Ensifer group</taxon>
        <taxon>Sinorhizobium</taxon>
    </lineage>
</organism>
<protein>
    <recommendedName>
        <fullName>Uncharacterized ABC transporter ATP-binding protein y4mK</fullName>
    </recommendedName>
</protein>
<reference key="1">
    <citation type="journal article" date="1997" name="Nature">
        <title>Molecular basis of symbiosis between Rhizobium and legumes.</title>
        <authorList>
            <person name="Freiberg C.A."/>
            <person name="Fellay R."/>
            <person name="Bairoch A."/>
            <person name="Broughton W.J."/>
            <person name="Rosenthal A."/>
            <person name="Perret X."/>
        </authorList>
    </citation>
    <scope>NUCLEOTIDE SEQUENCE [LARGE SCALE GENOMIC DNA]</scope>
    <source>
        <strain>NBRC 101917 / NGR234</strain>
    </source>
</reference>
<reference key="2">
    <citation type="journal article" date="2009" name="Appl. Environ. Microbiol.">
        <title>Rhizobium sp. strain NGR234 possesses a remarkable number of secretion systems.</title>
        <authorList>
            <person name="Schmeisser C."/>
            <person name="Liesegang H."/>
            <person name="Krysciak D."/>
            <person name="Bakkou N."/>
            <person name="Le Quere A."/>
            <person name="Wollherr A."/>
            <person name="Heinemeyer I."/>
            <person name="Morgenstern B."/>
            <person name="Pommerening-Roeser A."/>
            <person name="Flores M."/>
            <person name="Palacios R."/>
            <person name="Brenner S."/>
            <person name="Gottschalk G."/>
            <person name="Schmitz R.A."/>
            <person name="Broughton W.J."/>
            <person name="Perret X."/>
            <person name="Strittmatter A.W."/>
            <person name="Streit W.R."/>
        </authorList>
    </citation>
    <scope>NUCLEOTIDE SEQUENCE [LARGE SCALE GENOMIC DNA]</scope>
    <source>
        <strain>NBRC 101917 / NGR234</strain>
    </source>
</reference>